<accession>A5D7P0</accession>
<name>MPIP3_BOVIN</name>
<protein>
    <recommendedName>
        <fullName>M-phase inducer phosphatase 3</fullName>
        <ecNumber>3.1.3.48</ecNumber>
    </recommendedName>
    <alternativeName>
        <fullName>Dual specificity phosphatase Cdc25C</fullName>
    </alternativeName>
</protein>
<organism>
    <name type="scientific">Bos taurus</name>
    <name type="common">Bovine</name>
    <dbReference type="NCBI Taxonomy" id="9913"/>
    <lineage>
        <taxon>Eukaryota</taxon>
        <taxon>Metazoa</taxon>
        <taxon>Chordata</taxon>
        <taxon>Craniata</taxon>
        <taxon>Vertebrata</taxon>
        <taxon>Euteleostomi</taxon>
        <taxon>Mammalia</taxon>
        <taxon>Eutheria</taxon>
        <taxon>Laurasiatheria</taxon>
        <taxon>Artiodactyla</taxon>
        <taxon>Ruminantia</taxon>
        <taxon>Pecora</taxon>
        <taxon>Bovidae</taxon>
        <taxon>Bovinae</taxon>
        <taxon>Bos</taxon>
    </lineage>
</organism>
<comment type="function">
    <text evidence="2">Functions as a dosage-dependent inducer in mitotic control. Tyrosine protein phosphatase required for progression of the cell cycle. When phosphorylated, highly effective in activating G2 cells into prophase. Directly dephosphorylates CDK1 and activates its kinase activity.</text>
</comment>
<comment type="catalytic activity">
    <reaction evidence="2">
        <text>O-phospho-L-tyrosyl-[protein] + H2O = L-tyrosyl-[protein] + phosphate</text>
        <dbReference type="Rhea" id="RHEA:10684"/>
        <dbReference type="Rhea" id="RHEA-COMP:10136"/>
        <dbReference type="Rhea" id="RHEA-COMP:20101"/>
        <dbReference type="ChEBI" id="CHEBI:15377"/>
        <dbReference type="ChEBI" id="CHEBI:43474"/>
        <dbReference type="ChEBI" id="CHEBI:46858"/>
        <dbReference type="ChEBI" id="CHEBI:61978"/>
        <dbReference type="EC" id="3.1.3.48"/>
    </reaction>
    <physiologicalReaction direction="left-to-right" evidence="2">
        <dbReference type="Rhea" id="RHEA:10685"/>
    </physiologicalReaction>
</comment>
<comment type="subunit">
    <text evidence="2">Interacts with MAPK14 and 14-3-3 proteins. When phosphorylated on Ser-130 and/or Thr-131, interacts with PLK1. Interacts with MARK3/C-TAK1.</text>
</comment>
<comment type="subcellular location">
    <subcellularLocation>
        <location evidence="2">Nucleus</location>
    </subcellularLocation>
</comment>
<comment type="developmental stage">
    <text>Expressed predominantly in G2 phase.</text>
</comment>
<comment type="PTM">
    <text evidence="2">Phosphorylated by CHEK1 and MAPK14 at Ser-220. This phosphorylation creates a binding site for 14-3-3 protein and inhibits the phosphatase. Phosphorylated by PLK4. Phosphorylated by PLK1, leading to activate the phosphatase activity. Phosphorylation by PLK3 at Ser-192 promotes nuclear translocation. Ser-199 is a minor phosphorylation site (By similarity). Phosphorylation by CDK1 occurs at G2 and G2-M transition and leads to increased activity (By similarity).</text>
</comment>
<comment type="similarity">
    <text evidence="5">Belongs to the MPI phosphatase family.</text>
</comment>
<reference key="1">
    <citation type="submission" date="2007-04" db="EMBL/GenBank/DDBJ databases">
        <authorList>
            <consortium name="NIH - Mammalian Gene Collection (MGC) project"/>
        </authorList>
    </citation>
    <scope>NUCLEOTIDE SEQUENCE [LARGE SCALE MRNA]</scope>
    <source>
        <strain>Hereford</strain>
        <tissue>Thymus</tissue>
    </source>
</reference>
<dbReference type="EC" id="3.1.3.48"/>
<dbReference type="EMBL" id="BC140630">
    <property type="protein sequence ID" value="AAI40631.1"/>
    <property type="molecule type" value="mRNA"/>
</dbReference>
<dbReference type="RefSeq" id="NP_001091465.1">
    <property type="nucleotide sequence ID" value="NM_001097996.2"/>
</dbReference>
<dbReference type="RefSeq" id="XP_024849758.1">
    <property type="nucleotide sequence ID" value="XM_024993990.2"/>
</dbReference>
<dbReference type="RefSeq" id="XP_059744003.1">
    <property type="nucleotide sequence ID" value="XM_059888020.1"/>
</dbReference>
<dbReference type="RefSeq" id="XP_059744004.1">
    <property type="nucleotide sequence ID" value="XM_059888021.1"/>
</dbReference>
<dbReference type="RefSeq" id="XP_059744005.1">
    <property type="nucleotide sequence ID" value="XM_059888022.1"/>
</dbReference>
<dbReference type="SMR" id="A5D7P0"/>
<dbReference type="FunCoup" id="A5D7P0">
    <property type="interactions" value="879"/>
</dbReference>
<dbReference type="STRING" id="9913.ENSBTAP00000006968"/>
<dbReference type="PaxDb" id="9913-ENSBTAP00000006968"/>
<dbReference type="GeneID" id="507731"/>
<dbReference type="KEGG" id="bta:507731"/>
<dbReference type="CTD" id="995"/>
<dbReference type="VEuPathDB" id="HostDB:ENSBTAG00000005293"/>
<dbReference type="eggNOG" id="KOG3772">
    <property type="taxonomic scope" value="Eukaryota"/>
</dbReference>
<dbReference type="HOGENOM" id="CLU_014464_4_0_1"/>
<dbReference type="InParanoid" id="A5D7P0"/>
<dbReference type="OMA" id="HLDSKGP"/>
<dbReference type="OrthoDB" id="26523at2759"/>
<dbReference type="TreeFam" id="TF101056"/>
<dbReference type="Reactome" id="R-BTA-156711">
    <property type="pathway name" value="Polo-like kinase mediated events"/>
</dbReference>
<dbReference type="Reactome" id="R-BTA-5625740">
    <property type="pathway name" value="RHO GTPases activate PKNs"/>
</dbReference>
<dbReference type="Reactome" id="R-BTA-6804115">
    <property type="pathway name" value="TP53 regulates transcription of additional cell cycle genes whose exact role in the p53 pathway remain uncertain"/>
</dbReference>
<dbReference type="Reactome" id="R-BTA-69273">
    <property type="pathway name" value="Cyclin A/B1/B2 associated events during G2/M transition"/>
</dbReference>
<dbReference type="Reactome" id="R-BTA-75035">
    <property type="pathway name" value="Chk1/Chk2(Cds1) mediated inactivation of Cyclin B:Cdk1 complex"/>
</dbReference>
<dbReference type="Proteomes" id="UP000009136">
    <property type="component" value="Chromosome 7"/>
</dbReference>
<dbReference type="Bgee" id="ENSBTAG00000005293">
    <property type="expression patterns" value="Expressed in oocyte and 68 other cell types or tissues"/>
</dbReference>
<dbReference type="GO" id="GO:0005737">
    <property type="term" value="C:cytoplasm"/>
    <property type="evidence" value="ECO:0000318"/>
    <property type="project" value="GO_Central"/>
</dbReference>
<dbReference type="GO" id="GO:0005634">
    <property type="term" value="C:nucleus"/>
    <property type="evidence" value="ECO:0000250"/>
    <property type="project" value="UniProtKB"/>
</dbReference>
<dbReference type="GO" id="GO:0004725">
    <property type="term" value="F:protein tyrosine phosphatase activity"/>
    <property type="evidence" value="ECO:0000318"/>
    <property type="project" value="GO_Central"/>
</dbReference>
<dbReference type="GO" id="GO:0051301">
    <property type="term" value="P:cell division"/>
    <property type="evidence" value="ECO:0007669"/>
    <property type="project" value="UniProtKB-KW"/>
</dbReference>
<dbReference type="GO" id="GO:0000086">
    <property type="term" value="P:G2/M transition of mitotic cell cycle"/>
    <property type="evidence" value="ECO:0000318"/>
    <property type="project" value="GO_Central"/>
</dbReference>
<dbReference type="GO" id="GO:0010971">
    <property type="term" value="P:positive regulation of G2/M transition of mitotic cell cycle"/>
    <property type="evidence" value="ECO:0000318"/>
    <property type="project" value="GO_Central"/>
</dbReference>
<dbReference type="GO" id="GO:0110032">
    <property type="term" value="P:positive regulation of G2/MI transition of meiotic cell cycle"/>
    <property type="evidence" value="ECO:0000318"/>
    <property type="project" value="GO_Central"/>
</dbReference>
<dbReference type="CDD" id="cd01530">
    <property type="entry name" value="Cdc25"/>
    <property type="match status" value="1"/>
</dbReference>
<dbReference type="FunFam" id="3.40.250.10:FF:000004">
    <property type="entry name" value="M-phase inducer phosphatase 1 isoform X1"/>
    <property type="match status" value="1"/>
</dbReference>
<dbReference type="Gene3D" id="3.40.250.10">
    <property type="entry name" value="Rhodanese-like domain"/>
    <property type="match status" value="1"/>
</dbReference>
<dbReference type="InterPro" id="IPR000751">
    <property type="entry name" value="MPI_Phosphatase"/>
</dbReference>
<dbReference type="InterPro" id="IPR001763">
    <property type="entry name" value="Rhodanese-like_dom"/>
</dbReference>
<dbReference type="InterPro" id="IPR036873">
    <property type="entry name" value="Rhodanese-like_dom_sf"/>
</dbReference>
<dbReference type="PANTHER" id="PTHR10828:SF64">
    <property type="entry name" value="M-PHASE INDUCER PHOSPHATASE 3"/>
    <property type="match status" value="1"/>
</dbReference>
<dbReference type="PANTHER" id="PTHR10828">
    <property type="entry name" value="M-PHASE INDUCER PHOSPHATASE DUAL SPECIFICITY PHOSPHATASE CDC25"/>
    <property type="match status" value="1"/>
</dbReference>
<dbReference type="Pfam" id="PF00581">
    <property type="entry name" value="Rhodanese"/>
    <property type="match status" value="1"/>
</dbReference>
<dbReference type="PRINTS" id="PR00716">
    <property type="entry name" value="MPIPHPHTASE"/>
</dbReference>
<dbReference type="SMART" id="SM00450">
    <property type="entry name" value="RHOD"/>
    <property type="match status" value="1"/>
</dbReference>
<dbReference type="SUPFAM" id="SSF52821">
    <property type="entry name" value="Rhodanese/Cell cycle control phosphatase"/>
    <property type="match status" value="1"/>
</dbReference>
<dbReference type="PROSITE" id="PS50206">
    <property type="entry name" value="RHODANESE_3"/>
    <property type="match status" value="1"/>
</dbReference>
<evidence type="ECO:0000250" key="1">
    <source>
        <dbReference type="UniProtKB" id="P30304"/>
    </source>
</evidence>
<evidence type="ECO:0000250" key="2">
    <source>
        <dbReference type="UniProtKB" id="P30307"/>
    </source>
</evidence>
<evidence type="ECO:0000255" key="3">
    <source>
        <dbReference type="PROSITE-ProRule" id="PRU00173"/>
    </source>
</evidence>
<evidence type="ECO:0000256" key="4">
    <source>
        <dbReference type="SAM" id="MobiDB-lite"/>
    </source>
</evidence>
<evidence type="ECO:0000305" key="5"/>
<sequence>MSAEFFSSKREEGSLASGPSFRSNQRKILNLLLERDASFSISSDLPTTPVEKKLFGDSANLSILSGGTPKRCLDLSNLSSGEMSATQLTASADLDETGHLESTGPEQVRLAGMNYRQHLIKCSPAQLFCSTPNALEHGRRKKDAICGSSANKENDNGNLVENEMKHLGSPITTVSKLHKNPELAEDQAEEISDELMEFSLEDQEKAKPPLNWSSLYRSSSLPDSLNSPSLKQVVKFKDSTIPDKLKKKYCSNQKELGKGLGLKKMVSLCDINMTQMLEEDSNQGPLIGDFSKVCALPTVSGKHQDLKYVNPETVAALLSGEFQGLIEKFYIIDCRYPYEYLGGHIQGALNLHSQEELYNFFLKKPIVPWDNQKRIVIVFHCEFSSERGPRMCRSLREEDRTLNQYPALYYPELYILKGGYRDFFPEYMELCEPQSYCPMHHQDHKAELLRCRNQSKAWEGERQLQEQIALLVKDVSP</sequence>
<proteinExistence type="evidence at transcript level"/>
<feature type="initiator methionine" description="Removed" evidence="2">
    <location>
        <position position="1"/>
    </location>
</feature>
<feature type="chain" id="PRO_0000365162" description="M-phase inducer phosphatase 3">
    <location>
        <begin position="2"/>
        <end position="477"/>
    </location>
</feature>
<feature type="domain" description="Rhodanese" evidence="3">
    <location>
        <begin position="325"/>
        <end position="432"/>
    </location>
</feature>
<feature type="region of interest" description="Disordered" evidence="4">
    <location>
        <begin position="1"/>
        <end position="20"/>
    </location>
</feature>
<feature type="active site" evidence="1">
    <location>
        <position position="381"/>
    </location>
</feature>
<feature type="modified residue" description="N-acetylserine" evidence="2">
    <location>
        <position position="2"/>
    </location>
</feature>
<feature type="modified residue" description="Phosphoserine" evidence="2">
    <location>
        <position position="20"/>
    </location>
</feature>
<feature type="modified residue" description="Phosphoserine" evidence="2">
    <location>
        <position position="38"/>
    </location>
</feature>
<feature type="modified residue" description="Phosphothreonine; by CDK1" evidence="2">
    <location>
        <position position="48"/>
    </location>
</feature>
<feature type="modified residue" description="Phosphoserine" evidence="2">
    <location>
        <position position="58"/>
    </location>
</feature>
<feature type="modified residue" description="Phosphoserine" evidence="2">
    <location>
        <position position="62"/>
    </location>
</feature>
<feature type="modified residue" description="Phosphoserine" evidence="2">
    <location>
        <position position="65"/>
    </location>
</feature>
<feature type="modified residue" description="Phosphothreonine; by CDK1" evidence="2">
    <location>
        <position position="68"/>
    </location>
</feature>
<feature type="modified residue" description="Phosphoserine; by CDK1" evidence="2">
    <location>
        <position position="123"/>
    </location>
</feature>
<feature type="modified residue" description="Phosphoserine" evidence="2">
    <location>
        <position position="130"/>
    </location>
</feature>
<feature type="modified residue" description="Phosphothreonine" evidence="2">
    <location>
        <position position="131"/>
    </location>
</feature>
<feature type="modified residue" description="Phosphoserine; by CDK1" evidence="2">
    <location>
        <position position="169"/>
    </location>
</feature>
<feature type="modified residue" description="Phosphoserine; by PLK3" evidence="2">
    <location>
        <position position="192"/>
    </location>
</feature>
<feature type="modified residue" description="Phosphoserine; by PLK3" evidence="2">
    <location>
        <position position="199"/>
    </location>
</feature>
<feature type="modified residue" description="Phosphoserine; by CDK1" evidence="2">
    <location>
        <position position="218"/>
    </location>
</feature>
<feature type="modified residue" description="Phosphoserine; by CHEK1, CHEK2, BRSK1, MAPK14 AND MARK3" evidence="2">
    <location>
        <position position="220"/>
    </location>
</feature>
<feature type="modified residue" description="Phosphoserine" evidence="2">
    <location>
        <position position="476"/>
    </location>
</feature>
<gene>
    <name type="primary">CDC25C</name>
</gene>
<keyword id="KW-0007">Acetylation</keyword>
<keyword id="KW-0131">Cell cycle</keyword>
<keyword id="KW-0132">Cell division</keyword>
<keyword id="KW-0378">Hydrolase</keyword>
<keyword id="KW-0498">Mitosis</keyword>
<keyword id="KW-0539">Nucleus</keyword>
<keyword id="KW-0597">Phosphoprotein</keyword>
<keyword id="KW-0904">Protein phosphatase</keyword>
<keyword id="KW-1185">Reference proteome</keyword>